<proteinExistence type="inferred from homology"/>
<comment type="function">
    <text evidence="1">Plays an important role in the de novo pathway of purine nucleotide biosynthesis. Catalyzes the first committed step in the biosynthesis of AMP from IMP.</text>
</comment>
<comment type="catalytic activity">
    <reaction evidence="1">
        <text>IMP + L-aspartate + GTP = N(6)-(1,2-dicarboxyethyl)-AMP + GDP + phosphate + 2 H(+)</text>
        <dbReference type="Rhea" id="RHEA:15753"/>
        <dbReference type="ChEBI" id="CHEBI:15378"/>
        <dbReference type="ChEBI" id="CHEBI:29991"/>
        <dbReference type="ChEBI" id="CHEBI:37565"/>
        <dbReference type="ChEBI" id="CHEBI:43474"/>
        <dbReference type="ChEBI" id="CHEBI:57567"/>
        <dbReference type="ChEBI" id="CHEBI:58053"/>
        <dbReference type="ChEBI" id="CHEBI:58189"/>
        <dbReference type="EC" id="6.3.4.4"/>
    </reaction>
</comment>
<comment type="cofactor">
    <cofactor evidence="1">
        <name>Mg(2+)</name>
        <dbReference type="ChEBI" id="CHEBI:18420"/>
    </cofactor>
    <text evidence="1">Binds 1 Mg(2+) ion per subunit.</text>
</comment>
<comment type="pathway">
    <text evidence="1">Purine metabolism; AMP biosynthesis via de novo pathway; AMP from IMP: step 1/2.</text>
</comment>
<comment type="subunit">
    <text evidence="1">Homodimer.</text>
</comment>
<comment type="subcellular location">
    <subcellularLocation>
        <location evidence="1">Cytoplasm</location>
    </subcellularLocation>
</comment>
<comment type="similarity">
    <text evidence="1">Belongs to the adenylosuccinate synthetase family.</text>
</comment>
<protein>
    <recommendedName>
        <fullName evidence="1">Adenylosuccinate synthetase</fullName>
        <shortName evidence="1">AMPSase</shortName>
        <shortName evidence="1">AdSS</shortName>
        <ecNumber evidence="1">6.3.4.4</ecNumber>
    </recommendedName>
    <alternativeName>
        <fullName evidence="1">IMP--aspartate ligase</fullName>
    </alternativeName>
</protein>
<accession>Q07J18</accession>
<feature type="chain" id="PRO_1000000905" description="Adenylosuccinate synthetase">
    <location>
        <begin position="1"/>
        <end position="430"/>
    </location>
</feature>
<feature type="active site" description="Proton acceptor" evidence="1">
    <location>
        <position position="13"/>
    </location>
</feature>
<feature type="active site" description="Proton donor" evidence="1">
    <location>
        <position position="41"/>
    </location>
</feature>
<feature type="binding site" evidence="1">
    <location>
        <begin position="12"/>
        <end position="18"/>
    </location>
    <ligand>
        <name>GTP</name>
        <dbReference type="ChEBI" id="CHEBI:37565"/>
    </ligand>
</feature>
<feature type="binding site" description="in other chain" evidence="1">
    <location>
        <begin position="13"/>
        <end position="16"/>
    </location>
    <ligand>
        <name>IMP</name>
        <dbReference type="ChEBI" id="CHEBI:58053"/>
        <note>ligand shared between dimeric partners</note>
    </ligand>
</feature>
<feature type="binding site" evidence="1">
    <location>
        <position position="13"/>
    </location>
    <ligand>
        <name>Mg(2+)</name>
        <dbReference type="ChEBI" id="CHEBI:18420"/>
    </ligand>
</feature>
<feature type="binding site" description="in other chain" evidence="1">
    <location>
        <begin position="38"/>
        <end position="41"/>
    </location>
    <ligand>
        <name>IMP</name>
        <dbReference type="ChEBI" id="CHEBI:58053"/>
        <note>ligand shared between dimeric partners</note>
    </ligand>
</feature>
<feature type="binding site" evidence="1">
    <location>
        <begin position="40"/>
        <end position="42"/>
    </location>
    <ligand>
        <name>GTP</name>
        <dbReference type="ChEBI" id="CHEBI:37565"/>
    </ligand>
</feature>
<feature type="binding site" evidence="1">
    <location>
        <position position="40"/>
    </location>
    <ligand>
        <name>Mg(2+)</name>
        <dbReference type="ChEBI" id="CHEBI:18420"/>
    </ligand>
</feature>
<feature type="binding site" description="in other chain" evidence="1">
    <location>
        <position position="130"/>
    </location>
    <ligand>
        <name>IMP</name>
        <dbReference type="ChEBI" id="CHEBI:58053"/>
        <note>ligand shared between dimeric partners</note>
    </ligand>
</feature>
<feature type="binding site" evidence="1">
    <location>
        <position position="144"/>
    </location>
    <ligand>
        <name>IMP</name>
        <dbReference type="ChEBI" id="CHEBI:58053"/>
        <note>ligand shared between dimeric partners</note>
    </ligand>
</feature>
<feature type="binding site" description="in other chain" evidence="1">
    <location>
        <position position="224"/>
    </location>
    <ligand>
        <name>IMP</name>
        <dbReference type="ChEBI" id="CHEBI:58053"/>
        <note>ligand shared between dimeric partners</note>
    </ligand>
</feature>
<feature type="binding site" description="in other chain" evidence="1">
    <location>
        <position position="239"/>
    </location>
    <ligand>
        <name>IMP</name>
        <dbReference type="ChEBI" id="CHEBI:58053"/>
        <note>ligand shared between dimeric partners</note>
    </ligand>
</feature>
<feature type="binding site" evidence="1">
    <location>
        <begin position="299"/>
        <end position="305"/>
    </location>
    <ligand>
        <name>substrate</name>
    </ligand>
</feature>
<feature type="binding site" description="in other chain" evidence="1">
    <location>
        <position position="303"/>
    </location>
    <ligand>
        <name>IMP</name>
        <dbReference type="ChEBI" id="CHEBI:58053"/>
        <note>ligand shared between dimeric partners</note>
    </ligand>
</feature>
<feature type="binding site" evidence="1">
    <location>
        <position position="305"/>
    </location>
    <ligand>
        <name>GTP</name>
        <dbReference type="ChEBI" id="CHEBI:37565"/>
    </ligand>
</feature>
<feature type="binding site" evidence="1">
    <location>
        <begin position="331"/>
        <end position="333"/>
    </location>
    <ligand>
        <name>GTP</name>
        <dbReference type="ChEBI" id="CHEBI:37565"/>
    </ligand>
</feature>
<feature type="binding site" evidence="1">
    <location>
        <begin position="413"/>
        <end position="415"/>
    </location>
    <ligand>
        <name>GTP</name>
        <dbReference type="ChEBI" id="CHEBI:37565"/>
    </ligand>
</feature>
<evidence type="ECO:0000255" key="1">
    <source>
        <dbReference type="HAMAP-Rule" id="MF_00011"/>
    </source>
</evidence>
<keyword id="KW-0963">Cytoplasm</keyword>
<keyword id="KW-0342">GTP-binding</keyword>
<keyword id="KW-0436">Ligase</keyword>
<keyword id="KW-0460">Magnesium</keyword>
<keyword id="KW-0479">Metal-binding</keyword>
<keyword id="KW-0547">Nucleotide-binding</keyword>
<keyword id="KW-0658">Purine biosynthesis</keyword>
<dbReference type="EC" id="6.3.4.4" evidence="1"/>
<dbReference type="EMBL" id="CP000463">
    <property type="protein sequence ID" value="ABJ08066.1"/>
    <property type="molecule type" value="Genomic_DNA"/>
</dbReference>
<dbReference type="SMR" id="Q07J18"/>
<dbReference type="STRING" id="316055.RPE_4141"/>
<dbReference type="KEGG" id="rpe:RPE_4141"/>
<dbReference type="eggNOG" id="COG0104">
    <property type="taxonomic scope" value="Bacteria"/>
</dbReference>
<dbReference type="HOGENOM" id="CLU_029848_0_0_5"/>
<dbReference type="OrthoDB" id="9807553at2"/>
<dbReference type="UniPathway" id="UPA00075">
    <property type="reaction ID" value="UER00335"/>
</dbReference>
<dbReference type="GO" id="GO:0005737">
    <property type="term" value="C:cytoplasm"/>
    <property type="evidence" value="ECO:0007669"/>
    <property type="project" value="UniProtKB-SubCell"/>
</dbReference>
<dbReference type="GO" id="GO:0004019">
    <property type="term" value="F:adenylosuccinate synthase activity"/>
    <property type="evidence" value="ECO:0007669"/>
    <property type="project" value="UniProtKB-UniRule"/>
</dbReference>
<dbReference type="GO" id="GO:0005525">
    <property type="term" value="F:GTP binding"/>
    <property type="evidence" value="ECO:0007669"/>
    <property type="project" value="UniProtKB-UniRule"/>
</dbReference>
<dbReference type="GO" id="GO:0000287">
    <property type="term" value="F:magnesium ion binding"/>
    <property type="evidence" value="ECO:0007669"/>
    <property type="project" value="UniProtKB-UniRule"/>
</dbReference>
<dbReference type="GO" id="GO:0044208">
    <property type="term" value="P:'de novo' AMP biosynthetic process"/>
    <property type="evidence" value="ECO:0007669"/>
    <property type="project" value="UniProtKB-UniRule"/>
</dbReference>
<dbReference type="GO" id="GO:0046040">
    <property type="term" value="P:IMP metabolic process"/>
    <property type="evidence" value="ECO:0007669"/>
    <property type="project" value="TreeGrafter"/>
</dbReference>
<dbReference type="CDD" id="cd03108">
    <property type="entry name" value="AdSS"/>
    <property type="match status" value="1"/>
</dbReference>
<dbReference type="FunFam" id="1.10.300.10:FF:000001">
    <property type="entry name" value="Adenylosuccinate synthetase"/>
    <property type="match status" value="1"/>
</dbReference>
<dbReference type="FunFam" id="3.90.170.10:FF:000001">
    <property type="entry name" value="Adenylosuccinate synthetase"/>
    <property type="match status" value="1"/>
</dbReference>
<dbReference type="Gene3D" id="3.40.440.10">
    <property type="entry name" value="Adenylosuccinate Synthetase, subunit A, domain 1"/>
    <property type="match status" value="1"/>
</dbReference>
<dbReference type="Gene3D" id="1.10.300.10">
    <property type="entry name" value="Adenylosuccinate Synthetase, subunit A, domain 2"/>
    <property type="match status" value="1"/>
</dbReference>
<dbReference type="Gene3D" id="3.90.170.10">
    <property type="entry name" value="Adenylosuccinate Synthetase, subunit A, domain 3"/>
    <property type="match status" value="1"/>
</dbReference>
<dbReference type="HAMAP" id="MF_00011">
    <property type="entry name" value="Adenylosucc_synth"/>
    <property type="match status" value="1"/>
</dbReference>
<dbReference type="InterPro" id="IPR018220">
    <property type="entry name" value="Adenylosuccin_syn_GTP-bd"/>
</dbReference>
<dbReference type="InterPro" id="IPR033128">
    <property type="entry name" value="Adenylosuccin_syn_Lys_AS"/>
</dbReference>
<dbReference type="InterPro" id="IPR042109">
    <property type="entry name" value="Adenylosuccinate_synth_dom1"/>
</dbReference>
<dbReference type="InterPro" id="IPR042110">
    <property type="entry name" value="Adenylosuccinate_synth_dom2"/>
</dbReference>
<dbReference type="InterPro" id="IPR042111">
    <property type="entry name" value="Adenylosuccinate_synth_dom3"/>
</dbReference>
<dbReference type="InterPro" id="IPR001114">
    <property type="entry name" value="Adenylosuccinate_synthetase"/>
</dbReference>
<dbReference type="InterPro" id="IPR027417">
    <property type="entry name" value="P-loop_NTPase"/>
</dbReference>
<dbReference type="NCBIfam" id="NF002223">
    <property type="entry name" value="PRK01117.1"/>
    <property type="match status" value="1"/>
</dbReference>
<dbReference type="NCBIfam" id="TIGR00184">
    <property type="entry name" value="purA"/>
    <property type="match status" value="1"/>
</dbReference>
<dbReference type="PANTHER" id="PTHR11846">
    <property type="entry name" value="ADENYLOSUCCINATE SYNTHETASE"/>
    <property type="match status" value="1"/>
</dbReference>
<dbReference type="PANTHER" id="PTHR11846:SF0">
    <property type="entry name" value="ADENYLOSUCCINATE SYNTHETASE"/>
    <property type="match status" value="1"/>
</dbReference>
<dbReference type="Pfam" id="PF00709">
    <property type="entry name" value="Adenylsucc_synt"/>
    <property type="match status" value="1"/>
</dbReference>
<dbReference type="SMART" id="SM00788">
    <property type="entry name" value="Adenylsucc_synt"/>
    <property type="match status" value="1"/>
</dbReference>
<dbReference type="SUPFAM" id="SSF52540">
    <property type="entry name" value="P-loop containing nucleoside triphosphate hydrolases"/>
    <property type="match status" value="1"/>
</dbReference>
<dbReference type="PROSITE" id="PS01266">
    <property type="entry name" value="ADENYLOSUCCIN_SYN_1"/>
    <property type="match status" value="1"/>
</dbReference>
<dbReference type="PROSITE" id="PS00513">
    <property type="entry name" value="ADENYLOSUCCIN_SYN_2"/>
    <property type="match status" value="1"/>
</dbReference>
<reference key="1">
    <citation type="submission" date="2006-09" db="EMBL/GenBank/DDBJ databases">
        <title>Complete sequence of Rhodopseudomonas palustris BisA53.</title>
        <authorList>
            <consortium name="US DOE Joint Genome Institute"/>
            <person name="Copeland A."/>
            <person name="Lucas S."/>
            <person name="Lapidus A."/>
            <person name="Barry K."/>
            <person name="Detter J.C."/>
            <person name="Glavina del Rio T."/>
            <person name="Hammon N."/>
            <person name="Israni S."/>
            <person name="Dalin E."/>
            <person name="Tice H."/>
            <person name="Pitluck S."/>
            <person name="Chain P."/>
            <person name="Malfatti S."/>
            <person name="Shin M."/>
            <person name="Vergez L."/>
            <person name="Schmutz J."/>
            <person name="Larimer F."/>
            <person name="Land M."/>
            <person name="Hauser L."/>
            <person name="Pelletier D.A."/>
            <person name="Kyrpides N."/>
            <person name="Kim E."/>
            <person name="Harwood C.S."/>
            <person name="Oda Y."/>
            <person name="Richardson P."/>
        </authorList>
    </citation>
    <scope>NUCLEOTIDE SEQUENCE [LARGE SCALE GENOMIC DNA]</scope>
    <source>
        <strain>BisA53</strain>
    </source>
</reference>
<gene>
    <name evidence="1" type="primary">purA</name>
    <name type="ordered locus">RPE_4141</name>
</gene>
<sequence>MANVVVVGAQWGDEGKGKIVDWLSEQADIVVRFQGGHNAGHTLVINGETYKLALLPSGVLRPSKLAVIGNGVVFDPQAFLDEVKKLQAQGVAISPENLRVAENVTLILPLHRELDAQRETAAKAGAIGTTQRGIGPAYEDKVGRRAIRLMDLADLAALPPKIDRLLAHHNALRRGLGLPEIDGAAILNELAALAPQLLPYAETVWRLLDIKRREGKRILFEGAQGALLDVDHGTYPYVTSSNTVAAQAATGTGMGPSSVGYVLGICKAYTTRVGAGPFPTELKNEIGEEIGRRGKEFGVNTGRKRRCGWFDAVLVRQTVRTCGIHGLALTKLDILDGFETIEVCVGYRLDGKEIDHLPAGEGAQARVEPIYETIEGWKEPTANARSWADLPAQAIKYVRRIEELVGCPVALLSTSPEREDTILVQNPFEA</sequence>
<name>PURA_RHOP5</name>
<organism>
    <name type="scientific">Rhodopseudomonas palustris (strain BisA53)</name>
    <dbReference type="NCBI Taxonomy" id="316055"/>
    <lineage>
        <taxon>Bacteria</taxon>
        <taxon>Pseudomonadati</taxon>
        <taxon>Pseudomonadota</taxon>
        <taxon>Alphaproteobacteria</taxon>
        <taxon>Hyphomicrobiales</taxon>
        <taxon>Nitrobacteraceae</taxon>
        <taxon>Rhodopseudomonas</taxon>
    </lineage>
</organism>